<sequence length="121" mass="14254">MSEHRQALGRYGEELAVKHIRQAGLTVLECNYRCPLGEMDIIAREGETIIFIEVRTRSTGSRGWGEESITAKKRERLYRIATHYLKYRNYKEWPSLRFDLIAIRCQDQEGKQPDIIWIRGI</sequence>
<protein>
    <recommendedName>
        <fullName evidence="1">UPF0102 protein DSY2577</fullName>
    </recommendedName>
</protein>
<reference key="1">
    <citation type="journal article" date="2006" name="J. Bacteriol.">
        <title>Complete genome sequence of the dehalorespiring bacterium Desulfitobacterium hafniense Y51 and comparison with Dehalococcoides ethenogenes 195.</title>
        <authorList>
            <person name="Nonaka H."/>
            <person name="Keresztes G."/>
            <person name="Shinoda Y."/>
            <person name="Ikenaga Y."/>
            <person name="Abe M."/>
            <person name="Naito K."/>
            <person name="Inatomi K."/>
            <person name="Furukawa K."/>
            <person name="Inui M."/>
            <person name="Yukawa H."/>
        </authorList>
    </citation>
    <scope>NUCLEOTIDE SEQUENCE [LARGE SCALE GENOMIC DNA]</scope>
    <source>
        <strain>Y51</strain>
    </source>
</reference>
<feature type="chain" id="PRO_1000009211" description="UPF0102 protein DSY2577">
    <location>
        <begin position="1"/>
        <end position="121"/>
    </location>
</feature>
<evidence type="ECO:0000255" key="1">
    <source>
        <dbReference type="HAMAP-Rule" id="MF_00048"/>
    </source>
</evidence>
<dbReference type="EMBL" id="AP008230">
    <property type="protein sequence ID" value="BAE84366.1"/>
    <property type="molecule type" value="Genomic_DNA"/>
</dbReference>
<dbReference type="RefSeq" id="WP_005813234.1">
    <property type="nucleotide sequence ID" value="NC_007907.1"/>
</dbReference>
<dbReference type="SMR" id="Q24UC6"/>
<dbReference type="STRING" id="138119.DSY2577"/>
<dbReference type="KEGG" id="dsy:DSY2577"/>
<dbReference type="eggNOG" id="COG0792">
    <property type="taxonomic scope" value="Bacteria"/>
</dbReference>
<dbReference type="HOGENOM" id="CLU_115353_2_3_9"/>
<dbReference type="Proteomes" id="UP000001946">
    <property type="component" value="Chromosome"/>
</dbReference>
<dbReference type="GO" id="GO:0003676">
    <property type="term" value="F:nucleic acid binding"/>
    <property type="evidence" value="ECO:0007669"/>
    <property type="project" value="InterPro"/>
</dbReference>
<dbReference type="CDD" id="cd20736">
    <property type="entry name" value="PoNe_Nuclease"/>
    <property type="match status" value="1"/>
</dbReference>
<dbReference type="Gene3D" id="3.40.1350.10">
    <property type="match status" value="1"/>
</dbReference>
<dbReference type="HAMAP" id="MF_00048">
    <property type="entry name" value="UPF0102"/>
    <property type="match status" value="1"/>
</dbReference>
<dbReference type="InterPro" id="IPR011335">
    <property type="entry name" value="Restrct_endonuc-II-like"/>
</dbReference>
<dbReference type="InterPro" id="IPR011856">
    <property type="entry name" value="tRNA_endonuc-like_dom_sf"/>
</dbReference>
<dbReference type="InterPro" id="IPR003509">
    <property type="entry name" value="UPF0102_YraN-like"/>
</dbReference>
<dbReference type="NCBIfam" id="NF009150">
    <property type="entry name" value="PRK12497.1-3"/>
    <property type="match status" value="1"/>
</dbReference>
<dbReference type="NCBIfam" id="NF009154">
    <property type="entry name" value="PRK12497.3-3"/>
    <property type="match status" value="1"/>
</dbReference>
<dbReference type="NCBIfam" id="TIGR00252">
    <property type="entry name" value="YraN family protein"/>
    <property type="match status" value="1"/>
</dbReference>
<dbReference type="PANTHER" id="PTHR34039">
    <property type="entry name" value="UPF0102 PROTEIN YRAN"/>
    <property type="match status" value="1"/>
</dbReference>
<dbReference type="PANTHER" id="PTHR34039:SF1">
    <property type="entry name" value="UPF0102 PROTEIN YRAN"/>
    <property type="match status" value="1"/>
</dbReference>
<dbReference type="Pfam" id="PF02021">
    <property type="entry name" value="UPF0102"/>
    <property type="match status" value="1"/>
</dbReference>
<dbReference type="SUPFAM" id="SSF52980">
    <property type="entry name" value="Restriction endonuclease-like"/>
    <property type="match status" value="1"/>
</dbReference>
<organism>
    <name type="scientific">Desulfitobacterium hafniense (strain Y51)</name>
    <dbReference type="NCBI Taxonomy" id="138119"/>
    <lineage>
        <taxon>Bacteria</taxon>
        <taxon>Bacillati</taxon>
        <taxon>Bacillota</taxon>
        <taxon>Clostridia</taxon>
        <taxon>Eubacteriales</taxon>
        <taxon>Desulfitobacteriaceae</taxon>
        <taxon>Desulfitobacterium</taxon>
    </lineage>
</organism>
<comment type="similarity">
    <text evidence="1">Belongs to the UPF0102 family.</text>
</comment>
<keyword id="KW-1185">Reference proteome</keyword>
<proteinExistence type="inferred from homology"/>
<gene>
    <name type="ordered locus">DSY2577</name>
</gene>
<accession>Q24UC6</accession>
<name>Y2577_DESHY</name>